<sequence length="373" mass="38615">MPRVSTHLVKLAAAALCALLLSAVAASATSRIKDLANIEGIRQNQLIGYGLVVGLNGTGDTLNNIPFTKQSLQAMLERMGVNIRGATIRTGNVAAVMVTGNLPPFATQGTRMDVTVSALGDAKNLQGGTLLVTPLLGADGNVYAVAQGSLAIGGFQAEGEAAKITRGVPTVGRIANGAIIEREIEFALNRLPNVRLALRNADFTTAKRIAAAVNDYLGTKCAEPLDPSTVQLSIPGEFKGNAVALLTEIEQLQVEPDQAAKIVIDERSGIIVMGRDVRVATVAVAQGNLTVSISESPQVSQPNPLGGGRTVVTPNSRIGVTEDGKKLAVVKDGVSLQQLVDGLNSLGIGPRDLIGILQAIKAAGAIEADIEVM</sequence>
<gene>
    <name evidence="1" type="primary">flgI</name>
    <name type="ordered locus">RPA3909</name>
</gene>
<accession>Q6N2Y8</accession>
<name>FLGI_RHOPA</name>
<keyword id="KW-0975">Bacterial flagellum</keyword>
<keyword id="KW-0574">Periplasm</keyword>
<keyword id="KW-0732">Signal</keyword>
<proteinExistence type="inferred from homology"/>
<comment type="function">
    <text evidence="1">Assembles around the rod to form the L-ring and probably protects the motor/basal body from shearing forces during rotation.</text>
</comment>
<comment type="subunit">
    <text evidence="1">The basal body constitutes a major portion of the flagellar organelle and consists of four rings (L,P,S, and M) mounted on a central rod.</text>
</comment>
<comment type="subcellular location">
    <subcellularLocation>
        <location evidence="1">Periplasm</location>
    </subcellularLocation>
    <subcellularLocation>
        <location evidence="1">Bacterial flagellum basal body</location>
    </subcellularLocation>
</comment>
<comment type="similarity">
    <text evidence="1">Belongs to the FlgI family.</text>
</comment>
<organism>
    <name type="scientific">Rhodopseudomonas palustris (strain ATCC BAA-98 / CGA009)</name>
    <dbReference type="NCBI Taxonomy" id="258594"/>
    <lineage>
        <taxon>Bacteria</taxon>
        <taxon>Pseudomonadati</taxon>
        <taxon>Pseudomonadota</taxon>
        <taxon>Alphaproteobacteria</taxon>
        <taxon>Hyphomicrobiales</taxon>
        <taxon>Nitrobacteraceae</taxon>
        <taxon>Rhodopseudomonas</taxon>
    </lineage>
</organism>
<reference key="1">
    <citation type="journal article" date="2004" name="Nat. Biotechnol.">
        <title>Complete genome sequence of the metabolically versatile photosynthetic bacterium Rhodopseudomonas palustris.</title>
        <authorList>
            <person name="Larimer F.W."/>
            <person name="Chain P."/>
            <person name="Hauser L."/>
            <person name="Lamerdin J.E."/>
            <person name="Malfatti S."/>
            <person name="Do L."/>
            <person name="Land M.L."/>
            <person name="Pelletier D.A."/>
            <person name="Beatty J.T."/>
            <person name="Lang A.S."/>
            <person name="Tabita F.R."/>
            <person name="Gibson J.L."/>
            <person name="Hanson T.E."/>
            <person name="Bobst C."/>
            <person name="Torres y Torres J.L."/>
            <person name="Peres C."/>
            <person name="Harrison F.H."/>
            <person name="Gibson J."/>
            <person name="Harwood C.S."/>
        </authorList>
    </citation>
    <scope>NUCLEOTIDE SEQUENCE [LARGE SCALE GENOMIC DNA]</scope>
    <source>
        <strain>ATCC BAA-98 / CGA009</strain>
    </source>
</reference>
<feature type="signal peptide" evidence="1">
    <location>
        <begin position="1"/>
        <end position="28"/>
    </location>
</feature>
<feature type="chain" id="PRO_0000041803" description="Flagellar P-ring protein">
    <location>
        <begin position="29"/>
        <end position="373"/>
    </location>
</feature>
<dbReference type="EMBL" id="BX572605">
    <property type="protein sequence ID" value="CAE29350.1"/>
    <property type="molecule type" value="Genomic_DNA"/>
</dbReference>
<dbReference type="RefSeq" id="WP_011159445.1">
    <property type="nucleotide sequence ID" value="NZ_CP116810.1"/>
</dbReference>
<dbReference type="SMR" id="Q6N2Y8"/>
<dbReference type="STRING" id="258594.RPA3909"/>
<dbReference type="GeneID" id="66895025"/>
<dbReference type="eggNOG" id="COG1706">
    <property type="taxonomic scope" value="Bacteria"/>
</dbReference>
<dbReference type="HOGENOM" id="CLU_045235_1_0_5"/>
<dbReference type="PhylomeDB" id="Q6N2Y8"/>
<dbReference type="GO" id="GO:0009428">
    <property type="term" value="C:bacterial-type flagellum basal body, distal rod, P ring"/>
    <property type="evidence" value="ECO:0007669"/>
    <property type="project" value="InterPro"/>
</dbReference>
<dbReference type="GO" id="GO:0030288">
    <property type="term" value="C:outer membrane-bounded periplasmic space"/>
    <property type="evidence" value="ECO:0007669"/>
    <property type="project" value="InterPro"/>
</dbReference>
<dbReference type="GO" id="GO:0005198">
    <property type="term" value="F:structural molecule activity"/>
    <property type="evidence" value="ECO:0007669"/>
    <property type="project" value="InterPro"/>
</dbReference>
<dbReference type="GO" id="GO:0071973">
    <property type="term" value="P:bacterial-type flagellum-dependent cell motility"/>
    <property type="evidence" value="ECO:0007669"/>
    <property type="project" value="InterPro"/>
</dbReference>
<dbReference type="HAMAP" id="MF_00416">
    <property type="entry name" value="FlgI"/>
    <property type="match status" value="1"/>
</dbReference>
<dbReference type="InterPro" id="IPR001782">
    <property type="entry name" value="Flag_FlgI"/>
</dbReference>
<dbReference type="NCBIfam" id="NF003676">
    <property type="entry name" value="PRK05303.1"/>
    <property type="match status" value="1"/>
</dbReference>
<dbReference type="PANTHER" id="PTHR30381">
    <property type="entry name" value="FLAGELLAR P-RING PERIPLASMIC PROTEIN FLGI"/>
    <property type="match status" value="1"/>
</dbReference>
<dbReference type="PANTHER" id="PTHR30381:SF0">
    <property type="entry name" value="FLAGELLAR P-RING PROTEIN"/>
    <property type="match status" value="1"/>
</dbReference>
<dbReference type="Pfam" id="PF02119">
    <property type="entry name" value="FlgI"/>
    <property type="match status" value="1"/>
</dbReference>
<dbReference type="PRINTS" id="PR01010">
    <property type="entry name" value="FLGPRINGFLGI"/>
</dbReference>
<protein>
    <recommendedName>
        <fullName evidence="1">Flagellar P-ring protein</fullName>
    </recommendedName>
    <alternativeName>
        <fullName evidence="1">Basal body P-ring protein</fullName>
    </alternativeName>
</protein>
<evidence type="ECO:0000255" key="1">
    <source>
        <dbReference type="HAMAP-Rule" id="MF_00416"/>
    </source>
</evidence>